<feature type="signal peptide" evidence="1">
    <location>
        <begin position="1"/>
        <end position="18"/>
    </location>
</feature>
<feature type="chain" id="PRO_0000020137" description="Putative lipoprotein YfiB">
    <location>
        <begin position="19"/>
        <end position="160"/>
    </location>
</feature>
<feature type="domain" description="OmpA-like" evidence="2">
    <location>
        <begin position="43"/>
        <end position="160"/>
    </location>
</feature>
<feature type="lipid moiety-binding region" description="N-palmitoyl cysteine" evidence="1">
    <location>
        <position position="19"/>
    </location>
</feature>
<feature type="lipid moiety-binding region" description="S-diacylglycerol cysteine" evidence="1">
    <location>
        <position position="19"/>
    </location>
</feature>
<accession>P07021</accession>
<evidence type="ECO:0000255" key="1">
    <source>
        <dbReference type="PROSITE-ProRule" id="PRU00303"/>
    </source>
</evidence>
<evidence type="ECO:0000255" key="2">
    <source>
        <dbReference type="PROSITE-ProRule" id="PRU00473"/>
    </source>
</evidence>
<evidence type="ECO:0000305" key="3"/>
<comment type="subcellular location">
    <subcellularLocation>
        <location evidence="1">Cell membrane</location>
        <topology evidence="1">Lipid-anchor</topology>
    </subcellularLocation>
</comment>
<comment type="similarity">
    <text evidence="3">Belongs to the outer membrane OOP (TC 1.B.6) superfamily.</text>
</comment>
<comment type="sequence caution" evidence="3">
    <conflict type="erroneous initiation">
        <sequence resource="EMBL-CDS" id="CAA25961"/>
    </conflict>
    <text>Truncated N-terminus.</text>
</comment>
<gene>
    <name type="primary">yfiB</name>
    <name type="ordered locus">b2605</name>
    <name type="ordered locus">JW2586</name>
</gene>
<organism>
    <name type="scientific">Escherichia coli (strain K12)</name>
    <dbReference type="NCBI Taxonomy" id="83333"/>
    <lineage>
        <taxon>Bacteria</taxon>
        <taxon>Pseudomonadati</taxon>
        <taxon>Pseudomonadota</taxon>
        <taxon>Gammaproteobacteria</taxon>
        <taxon>Enterobacterales</taxon>
        <taxon>Enterobacteriaceae</taxon>
        <taxon>Escherichia</taxon>
    </lineage>
</organism>
<keyword id="KW-1003">Cell membrane</keyword>
<keyword id="KW-0449">Lipoprotein</keyword>
<keyword id="KW-0472">Membrane</keyword>
<keyword id="KW-0564">Palmitate</keyword>
<keyword id="KW-1185">Reference proteome</keyword>
<keyword id="KW-0732">Signal</keyword>
<protein>
    <recommendedName>
        <fullName>Putative lipoprotein YfiB</fullName>
    </recommendedName>
</protein>
<proteinExistence type="inferred from homology"/>
<dbReference type="EMBL" id="X01818">
    <property type="protein sequence ID" value="CAA25961.1"/>
    <property type="status" value="ALT_INIT"/>
    <property type="molecule type" value="Genomic_DNA"/>
</dbReference>
<dbReference type="EMBL" id="U00096">
    <property type="protein sequence ID" value="AAC75654.1"/>
    <property type="molecule type" value="Genomic_DNA"/>
</dbReference>
<dbReference type="EMBL" id="AP009048">
    <property type="protein sequence ID" value="BAA16490.1"/>
    <property type="molecule type" value="Genomic_DNA"/>
</dbReference>
<dbReference type="PIR" id="H65038">
    <property type="entry name" value="H65038"/>
</dbReference>
<dbReference type="RefSeq" id="NP_417096.1">
    <property type="nucleotide sequence ID" value="NC_000913.3"/>
</dbReference>
<dbReference type="RefSeq" id="WP_000589847.1">
    <property type="nucleotide sequence ID" value="NZ_LN832404.1"/>
</dbReference>
<dbReference type="SMR" id="P07021"/>
<dbReference type="BioGRID" id="4260617">
    <property type="interactions" value="241"/>
</dbReference>
<dbReference type="DIP" id="DIP-12056N"/>
<dbReference type="FunCoup" id="P07021">
    <property type="interactions" value="63"/>
</dbReference>
<dbReference type="IntAct" id="P07021">
    <property type="interactions" value="1"/>
</dbReference>
<dbReference type="STRING" id="511145.b2605"/>
<dbReference type="TCDB" id="1.B.6.1.21">
    <property type="family name" value="the ompa-ompf porin (oop) family"/>
</dbReference>
<dbReference type="PaxDb" id="511145-b2605"/>
<dbReference type="EnsemblBacteria" id="AAC75654">
    <property type="protein sequence ID" value="AAC75654"/>
    <property type="gene ID" value="b2605"/>
</dbReference>
<dbReference type="GeneID" id="947094"/>
<dbReference type="KEGG" id="ecj:JW2586"/>
<dbReference type="KEGG" id="eco:b2605"/>
<dbReference type="KEGG" id="ecoc:C3026_14425"/>
<dbReference type="PATRIC" id="fig|1411691.4.peg.4134"/>
<dbReference type="EchoBASE" id="EB1141"/>
<dbReference type="eggNOG" id="COG2885">
    <property type="taxonomic scope" value="Bacteria"/>
</dbReference>
<dbReference type="HOGENOM" id="CLU_016890_12_3_6"/>
<dbReference type="InParanoid" id="P07021"/>
<dbReference type="OMA" id="TDEGWAF"/>
<dbReference type="OrthoDB" id="9782229at2"/>
<dbReference type="PhylomeDB" id="P07021"/>
<dbReference type="BioCyc" id="EcoCyc:EG11152-MONOMER"/>
<dbReference type="PRO" id="PR:P07021"/>
<dbReference type="Proteomes" id="UP000000625">
    <property type="component" value="Chromosome"/>
</dbReference>
<dbReference type="GO" id="GO:0120101">
    <property type="term" value="C:bacterial-type flagellum stator complex"/>
    <property type="evidence" value="ECO:0000318"/>
    <property type="project" value="GO_Central"/>
</dbReference>
<dbReference type="GO" id="GO:0071973">
    <property type="term" value="P:bacterial-type flagellum-dependent cell motility"/>
    <property type="evidence" value="ECO:0000318"/>
    <property type="project" value="GO_Central"/>
</dbReference>
<dbReference type="CDD" id="cd07185">
    <property type="entry name" value="OmpA_C-like"/>
    <property type="match status" value="1"/>
</dbReference>
<dbReference type="Gene3D" id="3.30.1330.60">
    <property type="entry name" value="OmpA-like domain"/>
    <property type="match status" value="1"/>
</dbReference>
<dbReference type="InterPro" id="IPR050330">
    <property type="entry name" value="Bact_OuterMem_StrucFunc"/>
</dbReference>
<dbReference type="InterPro" id="IPR006664">
    <property type="entry name" value="OMP_bac"/>
</dbReference>
<dbReference type="InterPro" id="IPR006665">
    <property type="entry name" value="OmpA-like"/>
</dbReference>
<dbReference type="InterPro" id="IPR036737">
    <property type="entry name" value="OmpA-like_sf"/>
</dbReference>
<dbReference type="NCBIfam" id="NF007424">
    <property type="entry name" value="PRK09967.1"/>
    <property type="match status" value="1"/>
</dbReference>
<dbReference type="PANTHER" id="PTHR30329:SF17">
    <property type="entry name" value="LIPOPROTEIN YFIB-RELATED"/>
    <property type="match status" value="1"/>
</dbReference>
<dbReference type="PANTHER" id="PTHR30329">
    <property type="entry name" value="STATOR ELEMENT OF FLAGELLAR MOTOR COMPLEX"/>
    <property type="match status" value="1"/>
</dbReference>
<dbReference type="Pfam" id="PF00691">
    <property type="entry name" value="OmpA"/>
    <property type="match status" value="1"/>
</dbReference>
<dbReference type="PRINTS" id="PR01021">
    <property type="entry name" value="OMPADOMAIN"/>
</dbReference>
<dbReference type="SUPFAM" id="SSF103088">
    <property type="entry name" value="OmpA-like"/>
    <property type="match status" value="1"/>
</dbReference>
<dbReference type="PROSITE" id="PS51123">
    <property type="entry name" value="OMPA_2"/>
    <property type="match status" value="1"/>
</dbReference>
<dbReference type="PROSITE" id="PS51257">
    <property type="entry name" value="PROKAR_LIPOPROTEIN"/>
    <property type="match status" value="1"/>
</dbReference>
<reference key="1">
    <citation type="journal article" date="1983" name="EMBO J.">
        <title>The nucleotide sequence of an Escherichia coli operon containing genes for the tRNA(m1G)methyltransferase, the ribosomal proteins S16 and L19 and a 21-K polypeptide.</title>
        <authorList>
            <person name="Bystroem A.S."/>
            <person name="Hjalmarsson K.J."/>
            <person name="Wikstroem P.M."/>
            <person name="Bjoerk G.R."/>
        </authorList>
    </citation>
    <scope>NUCLEOTIDE SEQUENCE [GENOMIC DNA]</scope>
</reference>
<reference key="2">
    <citation type="journal article" date="1997" name="DNA Res.">
        <title>Construction of a contiguous 874-kb sequence of the Escherichia coli-K12 genome corresponding to 50.0-68.8 min on the linkage map and analysis of its sequence features.</title>
        <authorList>
            <person name="Yamamoto Y."/>
            <person name="Aiba H."/>
            <person name="Baba T."/>
            <person name="Hayashi K."/>
            <person name="Inada T."/>
            <person name="Isono K."/>
            <person name="Itoh T."/>
            <person name="Kimura S."/>
            <person name="Kitagawa M."/>
            <person name="Makino K."/>
            <person name="Miki T."/>
            <person name="Mitsuhashi N."/>
            <person name="Mizobuchi K."/>
            <person name="Mori H."/>
            <person name="Nakade S."/>
            <person name="Nakamura Y."/>
            <person name="Nashimoto H."/>
            <person name="Oshima T."/>
            <person name="Oyama S."/>
            <person name="Saito N."/>
            <person name="Sampei G."/>
            <person name="Satoh Y."/>
            <person name="Sivasundaram S."/>
            <person name="Tagami H."/>
            <person name="Takahashi H."/>
            <person name="Takeda J."/>
            <person name="Takemoto K."/>
            <person name="Uehara K."/>
            <person name="Wada C."/>
            <person name="Yamagata S."/>
            <person name="Horiuchi T."/>
        </authorList>
    </citation>
    <scope>NUCLEOTIDE SEQUENCE [LARGE SCALE GENOMIC DNA]</scope>
    <source>
        <strain>K12 / W3110 / ATCC 27325 / DSM 5911</strain>
    </source>
</reference>
<reference key="3">
    <citation type="journal article" date="1997" name="Science">
        <title>The complete genome sequence of Escherichia coli K-12.</title>
        <authorList>
            <person name="Blattner F.R."/>
            <person name="Plunkett G. III"/>
            <person name="Bloch C.A."/>
            <person name="Perna N.T."/>
            <person name="Burland V."/>
            <person name="Riley M."/>
            <person name="Collado-Vides J."/>
            <person name="Glasner J.D."/>
            <person name="Rode C.K."/>
            <person name="Mayhew G.F."/>
            <person name="Gregor J."/>
            <person name="Davis N.W."/>
            <person name="Kirkpatrick H.A."/>
            <person name="Goeden M.A."/>
            <person name="Rose D.J."/>
            <person name="Mau B."/>
            <person name="Shao Y."/>
        </authorList>
    </citation>
    <scope>NUCLEOTIDE SEQUENCE [LARGE SCALE GENOMIC DNA]</scope>
    <source>
        <strain>K12 / MG1655 / ATCC 47076</strain>
    </source>
</reference>
<reference key="4">
    <citation type="journal article" date="2006" name="Mol. Syst. Biol.">
        <title>Highly accurate genome sequences of Escherichia coli K-12 strains MG1655 and W3110.</title>
        <authorList>
            <person name="Hayashi K."/>
            <person name="Morooka N."/>
            <person name="Yamamoto Y."/>
            <person name="Fujita K."/>
            <person name="Isono K."/>
            <person name="Choi S."/>
            <person name="Ohtsubo E."/>
            <person name="Baba T."/>
            <person name="Wanner B.L."/>
            <person name="Mori H."/>
            <person name="Horiuchi T."/>
        </authorList>
    </citation>
    <scope>NUCLEOTIDE SEQUENCE [LARGE SCALE GENOMIC DNA]</scope>
    <source>
        <strain>K12 / W3110 / ATCC 27325 / DSM 5911</strain>
    </source>
</reference>
<reference key="5">
    <citation type="journal article" date="1982" name="Mol. Gen. Genet.">
        <title>The structural gene (trmD) for the tRNA(m1G)methyltransferase is part of a four polypeptide operon in Escherichia coli K-12.</title>
        <authorList>
            <person name="Bystroem A.S."/>
            <person name="Bjoerk G.R."/>
        </authorList>
    </citation>
    <scope>SHOWS THAT THE PROTEIN IS EXPRESSED</scope>
</reference>
<name>YFIB_ECOLI</name>
<sequence>MIKHLVAPLVFTSLILTGCQSPQGKFTPEQVAAMQSYGFTESAGDWSLGLSDAILFAKNDYKLLPESQQQIQTMAAKLASTGLTHARMDGHTDNYGEDSYNEGLSLKRANVVADAWAMGGQIPRSNLTTQGLGKKYPIASNKTAQGRAENRRVAVVITTP</sequence>